<accession>D3WAC8</accession>
<organism>
    <name type="scientific">Lactococcus phage p2</name>
    <name type="common">Lactococcus lactis bacteriophage p2</name>
    <dbReference type="NCBI Taxonomy" id="254252"/>
    <lineage>
        <taxon>Viruses</taxon>
        <taxon>Duplodnaviria</taxon>
        <taxon>Heunggongvirae</taxon>
        <taxon>Uroviricota</taxon>
        <taxon>Caudoviricetes</taxon>
        <taxon>Skunavirus</taxon>
    </lineage>
</organism>
<reference key="1">
    <citation type="submission" date="2010-02" db="EMBL/GenBank/DDBJ databases">
        <title>Complete genomic sequence of Lactococcus lactis phage p2.</title>
        <authorList>
            <person name="Tremblay D.M."/>
            <person name="Deveau H."/>
            <person name="Moineau S."/>
        </authorList>
    </citation>
    <scope>NUCLEOTIDE SEQUENCE [LARGE SCALE GENOMIC DNA]</scope>
</reference>
<reference key="2">
    <citation type="journal article" date="2013" name="J. Virol.">
        <title>Structure, adsorption to host, and infection mechanism of virulent lactococcal phage p2.</title>
        <authorList>
            <person name="Bebeacua C."/>
            <person name="Tremblay D."/>
            <person name="Farenc C."/>
            <person name="Chapot-Chartier M.P."/>
            <person name="Sadovskaya I."/>
            <person name="van Heel M."/>
            <person name="Veesler D."/>
            <person name="Moineau S."/>
            <person name="Cambillau C."/>
        </authorList>
    </citation>
    <scope>STRUCTURE BY ELECTRON MICROSCOPY (21 ANGSTROMS) OF THE CONNECTOR</scope>
    <scope>FUNCTION</scope>
    <scope>SUBCELLULAR LOCATION</scope>
</reference>
<name>HCP2_BPLP2</name>
<evidence type="ECO:0000269" key="1">
    <source>
    </source>
</evidence>
<evidence type="ECO:0000303" key="2">
    <source>
    </source>
</evidence>
<evidence type="ECO:0000305" key="3"/>
<evidence type="ECO:0000305" key="4">
    <source>
    </source>
</evidence>
<proteinExistence type="evidence at protein level"/>
<keyword id="KW-0118">Viral capsid assembly</keyword>
<keyword id="KW-1171">Viral genome ejection through host cell envelope</keyword>
<keyword id="KW-1243">Viral long flexible tail ejection system</keyword>
<keyword id="KW-1162">Viral penetration into host cytoplasm</keyword>
<keyword id="KW-1188">Viral release from host cell</keyword>
<keyword id="KW-0946">Virion</keyword>
<keyword id="KW-1160">Virus entry into host cell</keyword>
<organismHost>
    <name type="scientific">Lactococcus lactis</name>
    <dbReference type="NCBI Taxonomy" id="1358"/>
</organismHost>
<dbReference type="EMBL" id="GQ979703">
    <property type="protein sequence ID" value="ADC80085.1"/>
    <property type="molecule type" value="Genomic_DNA"/>
</dbReference>
<dbReference type="RefSeq" id="YP_009613489.1">
    <property type="nucleotide sequence ID" value="NC_042024.1"/>
</dbReference>
<dbReference type="GeneID" id="40089864"/>
<dbReference type="Proteomes" id="UP000002348">
    <property type="component" value="Segment"/>
</dbReference>
<dbReference type="GO" id="GO:0044423">
    <property type="term" value="C:virion component"/>
    <property type="evidence" value="ECO:0007669"/>
    <property type="project" value="UniProtKB-KW"/>
</dbReference>
<dbReference type="GO" id="GO:0099001">
    <property type="term" value="P:symbiont genome ejection through host cell envelope, long flexible tail mechanism"/>
    <property type="evidence" value="ECO:0007669"/>
    <property type="project" value="UniProtKB-KW"/>
</dbReference>
<comment type="function">
    <text evidence="4">Probably functions as a stopper that is part of the head-tail connector and that locks the viral DNA in the capsid. During assembly, functions as a docking platform which the preassembled tail can bind to. Plays a role in morphogenesis of the virion capsid after genome packaging.</text>
</comment>
<comment type="subcellular location">
    <subcellularLocation>
        <location evidence="1">Virion</location>
    </subcellularLocation>
    <text evidence="1">Part of the connector between the portal and the tail.</text>
</comment>
<comment type="similarity">
    <text evidence="3">Belongs to the skunalikevirus head completion protein 2 family.</text>
</comment>
<sequence length="112" mass="12737">MEFDSYIDWYNNLLTMPLNDVILGVKDTIEDKTVYLSLSDSKVIKMDNTSFVMGYYYQVVLSVKDVDDELVGLVGNVLQNGWNMTNWSENSHLYNYTGTVYLPCGAGGQAWQ</sequence>
<feature type="chain" id="PRO_0000438230" description="Probable head completion protein 2">
    <location>
        <begin position="1"/>
        <end position="112"/>
    </location>
</feature>
<protein>
    <recommendedName>
        <fullName evidence="2">Probable head completion protein 2</fullName>
    </recommendedName>
    <alternativeName>
        <fullName evidence="3">Connector protein gp9</fullName>
    </alternativeName>
    <alternativeName>
        <fullName evidence="3">Gene product 9</fullName>
        <shortName evidence="3">gp9</shortName>
    </alternativeName>
    <alternativeName>
        <fullName evidence="2">Stopper protein gp9</fullName>
    </alternativeName>
</protein>